<dbReference type="EC" id="7.3.2.2" evidence="1"/>
<dbReference type="EMBL" id="AE017198">
    <property type="protein sequence ID" value="AAS08112.1"/>
    <property type="status" value="ALT_INIT"/>
    <property type="molecule type" value="Genomic_DNA"/>
</dbReference>
<dbReference type="SMR" id="Q74LQ3"/>
<dbReference type="KEGG" id="ljo:LJ_0130"/>
<dbReference type="eggNOG" id="COG3638">
    <property type="taxonomic scope" value="Bacteria"/>
</dbReference>
<dbReference type="HOGENOM" id="CLU_000604_1_22_9"/>
<dbReference type="Proteomes" id="UP000000581">
    <property type="component" value="Chromosome"/>
</dbReference>
<dbReference type="GO" id="GO:0005886">
    <property type="term" value="C:plasma membrane"/>
    <property type="evidence" value="ECO:0007669"/>
    <property type="project" value="UniProtKB-SubCell"/>
</dbReference>
<dbReference type="GO" id="GO:0015416">
    <property type="term" value="F:ABC-type phosphonate transporter activity"/>
    <property type="evidence" value="ECO:0007669"/>
    <property type="project" value="UniProtKB-EC"/>
</dbReference>
<dbReference type="GO" id="GO:0005524">
    <property type="term" value="F:ATP binding"/>
    <property type="evidence" value="ECO:0007669"/>
    <property type="project" value="UniProtKB-KW"/>
</dbReference>
<dbReference type="GO" id="GO:0016887">
    <property type="term" value="F:ATP hydrolysis activity"/>
    <property type="evidence" value="ECO:0007669"/>
    <property type="project" value="InterPro"/>
</dbReference>
<dbReference type="CDD" id="cd03256">
    <property type="entry name" value="ABC_PhnC_transporter"/>
    <property type="match status" value="1"/>
</dbReference>
<dbReference type="Gene3D" id="3.40.50.300">
    <property type="entry name" value="P-loop containing nucleotide triphosphate hydrolases"/>
    <property type="match status" value="1"/>
</dbReference>
<dbReference type="InterPro" id="IPR003593">
    <property type="entry name" value="AAA+_ATPase"/>
</dbReference>
<dbReference type="InterPro" id="IPR003439">
    <property type="entry name" value="ABC_transporter-like_ATP-bd"/>
</dbReference>
<dbReference type="InterPro" id="IPR017871">
    <property type="entry name" value="ABC_transporter-like_CS"/>
</dbReference>
<dbReference type="InterPro" id="IPR012693">
    <property type="entry name" value="ABC_transpr_PhnC"/>
</dbReference>
<dbReference type="InterPro" id="IPR050086">
    <property type="entry name" value="MetN_ABC_transporter-like"/>
</dbReference>
<dbReference type="InterPro" id="IPR027417">
    <property type="entry name" value="P-loop_NTPase"/>
</dbReference>
<dbReference type="NCBIfam" id="TIGR02315">
    <property type="entry name" value="ABC_phnC"/>
    <property type="match status" value="1"/>
</dbReference>
<dbReference type="PANTHER" id="PTHR43166">
    <property type="entry name" value="AMINO ACID IMPORT ATP-BINDING PROTEIN"/>
    <property type="match status" value="1"/>
</dbReference>
<dbReference type="PANTHER" id="PTHR43166:SF6">
    <property type="entry name" value="PHOSPHONATES IMPORT ATP-BINDING PROTEIN PHNC"/>
    <property type="match status" value="1"/>
</dbReference>
<dbReference type="Pfam" id="PF00005">
    <property type="entry name" value="ABC_tran"/>
    <property type="match status" value="1"/>
</dbReference>
<dbReference type="SMART" id="SM00382">
    <property type="entry name" value="AAA"/>
    <property type="match status" value="1"/>
</dbReference>
<dbReference type="SUPFAM" id="SSF52540">
    <property type="entry name" value="P-loop containing nucleoside triphosphate hydrolases"/>
    <property type="match status" value="1"/>
</dbReference>
<dbReference type="PROSITE" id="PS00211">
    <property type="entry name" value="ABC_TRANSPORTER_1"/>
    <property type="match status" value="1"/>
</dbReference>
<dbReference type="PROSITE" id="PS50893">
    <property type="entry name" value="ABC_TRANSPORTER_2"/>
    <property type="match status" value="1"/>
</dbReference>
<dbReference type="PROSITE" id="PS51249">
    <property type="entry name" value="PHNC"/>
    <property type="match status" value="1"/>
</dbReference>
<sequence length="254" mass="28189">MIQLKNVSKIYDNGTVGLKDINLNIDKGEFIVVVGLSGAGKSTLLRSINRLQDVSEGDIIIDGKSITSAKGKDLREIRRDIGMIFQSFNLVKRSSVLRNVLTGRVGYYPTWKTTFNLFTKEDKQKAYEALQRVDLADKVYTRADQLSGGQQQRVAIARVLTQNPKIILADEPTASLDPQTSRRVMHDLKMLNEEYGMTVVANLHSVELAKEFGDRVIGVRAGQIVYDGKMSETSQAVFDDIYNGGNGKKGEEDA</sequence>
<proteinExistence type="inferred from homology"/>
<name>PHNC_LACJO</name>
<feature type="chain" id="PRO_0000092710" description="Phosphonates import ATP-binding protein PhnC">
    <location>
        <begin position="1"/>
        <end position="254"/>
    </location>
</feature>
<feature type="domain" description="ABC transporter" evidence="1">
    <location>
        <begin position="2"/>
        <end position="246"/>
    </location>
</feature>
<feature type="binding site" evidence="1">
    <location>
        <begin position="35"/>
        <end position="42"/>
    </location>
    <ligand>
        <name>ATP</name>
        <dbReference type="ChEBI" id="CHEBI:30616"/>
    </ligand>
</feature>
<accession>Q74LQ3</accession>
<comment type="function">
    <text evidence="1">Part of the ABC transporter complex PhnCDE involved in phosphonates import. Responsible for energy coupling to the transport system.</text>
</comment>
<comment type="catalytic activity">
    <reaction evidence="1">
        <text>phosphonate(out) + ATP + H2O = phosphonate(in) + ADP + phosphate + H(+)</text>
        <dbReference type="Rhea" id="RHEA:18065"/>
        <dbReference type="ChEBI" id="CHEBI:15377"/>
        <dbReference type="ChEBI" id="CHEBI:15378"/>
        <dbReference type="ChEBI" id="CHEBI:16215"/>
        <dbReference type="ChEBI" id="CHEBI:30616"/>
        <dbReference type="ChEBI" id="CHEBI:43474"/>
        <dbReference type="ChEBI" id="CHEBI:456216"/>
        <dbReference type="EC" id="7.3.2.2"/>
    </reaction>
</comment>
<comment type="subunit">
    <text evidence="1">The complex is composed of two ATP-binding proteins (PhnC), two transmembrane proteins (PhnE) and a solute-binding protein (PhnD).</text>
</comment>
<comment type="subcellular location">
    <subcellularLocation>
        <location evidence="1">Cell membrane</location>
        <topology evidence="1">Peripheral membrane protein</topology>
    </subcellularLocation>
</comment>
<comment type="similarity">
    <text evidence="1">Belongs to the ABC transporter superfamily. Phosphonates importer (TC 3.A.1.9.1) family.</text>
</comment>
<comment type="sequence caution" evidence="2">
    <conflict type="erroneous initiation">
        <sequence resource="EMBL-CDS" id="AAS08112"/>
    </conflict>
</comment>
<reference key="1">
    <citation type="journal article" date="2004" name="Proc. Natl. Acad. Sci. U.S.A.">
        <title>The genome sequence of the probiotic intestinal bacterium Lactobacillus johnsonii NCC 533.</title>
        <authorList>
            <person name="Pridmore R.D."/>
            <person name="Berger B."/>
            <person name="Desiere F."/>
            <person name="Vilanova D."/>
            <person name="Barretto C."/>
            <person name="Pittet A.-C."/>
            <person name="Zwahlen M.-C."/>
            <person name="Rouvet M."/>
            <person name="Altermann E."/>
            <person name="Barrangou R."/>
            <person name="Mollet B."/>
            <person name="Mercenier A."/>
            <person name="Klaenhammer T."/>
            <person name="Arigoni F."/>
            <person name="Schell M.A."/>
        </authorList>
    </citation>
    <scope>NUCLEOTIDE SEQUENCE [LARGE SCALE GENOMIC DNA]</scope>
    <source>
        <strain>CNCM I-1225 / La1 / NCC 533</strain>
    </source>
</reference>
<keyword id="KW-0067">ATP-binding</keyword>
<keyword id="KW-1003">Cell membrane</keyword>
<keyword id="KW-0472">Membrane</keyword>
<keyword id="KW-0547">Nucleotide-binding</keyword>
<keyword id="KW-0918">Phosphonate transport</keyword>
<keyword id="KW-1278">Translocase</keyword>
<keyword id="KW-0813">Transport</keyword>
<organism>
    <name type="scientific">Lactobacillus johnsonii (strain CNCM I-12250 / La1 / NCC 533)</name>
    <dbReference type="NCBI Taxonomy" id="257314"/>
    <lineage>
        <taxon>Bacteria</taxon>
        <taxon>Bacillati</taxon>
        <taxon>Bacillota</taxon>
        <taxon>Bacilli</taxon>
        <taxon>Lactobacillales</taxon>
        <taxon>Lactobacillaceae</taxon>
        <taxon>Lactobacillus</taxon>
    </lineage>
</organism>
<protein>
    <recommendedName>
        <fullName evidence="1">Phosphonates import ATP-binding protein PhnC</fullName>
        <ecNumber evidence="1">7.3.2.2</ecNumber>
    </recommendedName>
</protein>
<evidence type="ECO:0000255" key="1">
    <source>
        <dbReference type="HAMAP-Rule" id="MF_01713"/>
    </source>
</evidence>
<evidence type="ECO:0000305" key="2"/>
<gene>
    <name evidence="1" type="primary">phnC</name>
    <name type="ordered locus">LJ_0130</name>
</gene>